<dbReference type="EMBL" id="Z18948">
    <property type="protein sequence ID" value="CAA79471.1"/>
    <property type="molecule type" value="mRNA"/>
</dbReference>
<dbReference type="EMBL" id="Z18950">
    <property type="protein sequence ID" value="CAA79473.1"/>
    <property type="molecule type" value="Genomic_DNA"/>
</dbReference>
<dbReference type="EMBL" id="BT006955">
    <property type="protein sequence ID" value="AAP35601.1"/>
    <property type="molecule type" value="mRNA"/>
</dbReference>
<dbReference type="EMBL" id="CR542163">
    <property type="protein sequence ID" value="CAG46960.1"/>
    <property type="molecule type" value="mRNA"/>
</dbReference>
<dbReference type="EMBL" id="CR542185">
    <property type="protein sequence ID" value="CAG46982.1"/>
    <property type="molecule type" value="mRNA"/>
</dbReference>
<dbReference type="EMBL" id="BX470102">
    <property type="status" value="NOT_ANNOTATED_CDS"/>
    <property type="molecule type" value="Genomic_DNA"/>
</dbReference>
<dbReference type="EMBL" id="CH471121">
    <property type="protein sequence ID" value="EAW53306.1"/>
    <property type="molecule type" value="Genomic_DNA"/>
</dbReference>
<dbReference type="EMBL" id="CH471121">
    <property type="protein sequence ID" value="EAW53307.1"/>
    <property type="molecule type" value="Genomic_DNA"/>
</dbReference>
<dbReference type="EMBL" id="BC012893">
    <property type="protein sequence ID" value="AAH12893.1"/>
    <property type="molecule type" value="mRNA"/>
</dbReference>
<dbReference type="CCDS" id="CCDS1043.1"/>
<dbReference type="PIR" id="C48219">
    <property type="entry name" value="C48219"/>
</dbReference>
<dbReference type="PIR" id="S70326">
    <property type="entry name" value="S70326"/>
</dbReference>
<dbReference type="RefSeq" id="NP_002951.1">
    <property type="nucleotide sequence ID" value="NM_002960.2"/>
</dbReference>
<dbReference type="PDB" id="1KSO">
    <property type="method" value="X-ray"/>
    <property type="resolution" value="1.70 A"/>
    <property type="chains" value="A/B=1-101"/>
</dbReference>
<dbReference type="PDB" id="3NSI">
    <property type="method" value="X-ray"/>
    <property type="resolution" value="2.15 A"/>
    <property type="chains" value="A/B=1-101"/>
</dbReference>
<dbReference type="PDB" id="3NSK">
    <property type="method" value="X-ray"/>
    <property type="resolution" value="1.55 A"/>
    <property type="chains" value="A/B=1-101"/>
</dbReference>
<dbReference type="PDB" id="3NSL">
    <property type="method" value="X-ray"/>
    <property type="resolution" value="1.50 A"/>
    <property type="chains" value="A/B/C/D/E/F=2-101"/>
</dbReference>
<dbReference type="PDB" id="3NSO">
    <property type="method" value="X-ray"/>
    <property type="resolution" value="1.45 A"/>
    <property type="chains" value="A/B=1-101"/>
</dbReference>
<dbReference type="PDBsum" id="1KSO"/>
<dbReference type="PDBsum" id="3NSI"/>
<dbReference type="PDBsum" id="3NSK"/>
<dbReference type="PDBsum" id="3NSL"/>
<dbReference type="PDBsum" id="3NSO"/>
<dbReference type="SMR" id="P33764"/>
<dbReference type="BioGRID" id="112182">
    <property type="interactions" value="77"/>
</dbReference>
<dbReference type="FunCoup" id="P33764">
    <property type="interactions" value="177"/>
</dbReference>
<dbReference type="IntAct" id="P33764">
    <property type="interactions" value="56"/>
</dbReference>
<dbReference type="MINT" id="P33764"/>
<dbReference type="STRING" id="9606.ENSP00000357702"/>
<dbReference type="iPTMnet" id="P33764"/>
<dbReference type="BioMuta" id="S100A3"/>
<dbReference type="DMDM" id="464729"/>
<dbReference type="jPOST" id="P33764"/>
<dbReference type="MassIVE" id="P33764"/>
<dbReference type="PaxDb" id="9606-ENSP00000357702"/>
<dbReference type="PeptideAtlas" id="P33764"/>
<dbReference type="ProteomicsDB" id="54924"/>
<dbReference type="Pumba" id="P33764"/>
<dbReference type="Antibodypedia" id="20380">
    <property type="antibodies" value="233 antibodies from 31 providers"/>
</dbReference>
<dbReference type="DNASU" id="6274"/>
<dbReference type="Ensembl" id="ENST00000368712.1">
    <property type="protein sequence ID" value="ENSP00000357701.1"/>
    <property type="gene ID" value="ENSG00000188015.10"/>
</dbReference>
<dbReference type="Ensembl" id="ENST00000368713.8">
    <property type="protein sequence ID" value="ENSP00000357702.3"/>
    <property type="gene ID" value="ENSG00000188015.10"/>
</dbReference>
<dbReference type="GeneID" id="6274"/>
<dbReference type="KEGG" id="hsa:6274"/>
<dbReference type="MANE-Select" id="ENST00000368713.8">
    <property type="protein sequence ID" value="ENSP00000357702.3"/>
    <property type="RefSeq nucleotide sequence ID" value="NM_002960.2"/>
    <property type="RefSeq protein sequence ID" value="NP_002951.1"/>
</dbReference>
<dbReference type="UCSC" id="uc001fca.2">
    <property type="organism name" value="human"/>
</dbReference>
<dbReference type="AGR" id="HGNC:10493"/>
<dbReference type="CTD" id="6274"/>
<dbReference type="DisGeNET" id="6274"/>
<dbReference type="GeneCards" id="S100A3"/>
<dbReference type="HGNC" id="HGNC:10493">
    <property type="gene designation" value="S100A3"/>
</dbReference>
<dbReference type="HPA" id="ENSG00000188015">
    <property type="expression patterns" value="Tissue enriched (skin)"/>
</dbReference>
<dbReference type="MIM" id="176992">
    <property type="type" value="gene"/>
</dbReference>
<dbReference type="neXtProt" id="NX_P33764"/>
<dbReference type="OpenTargets" id="ENSG00000188015"/>
<dbReference type="PharmGKB" id="PA34905"/>
<dbReference type="VEuPathDB" id="HostDB:ENSG00000188015"/>
<dbReference type="eggNOG" id="ENOG502SSQB">
    <property type="taxonomic scope" value="Eukaryota"/>
</dbReference>
<dbReference type="GeneTree" id="ENSGT00940000161959"/>
<dbReference type="HOGENOM" id="CLU_138624_2_0_1"/>
<dbReference type="InParanoid" id="P33764"/>
<dbReference type="OMA" id="CVYCHEY"/>
<dbReference type="OrthoDB" id="26525at2759"/>
<dbReference type="PAN-GO" id="P33764">
    <property type="GO annotations" value="2 GO annotations based on evolutionary models"/>
</dbReference>
<dbReference type="PhylomeDB" id="P33764"/>
<dbReference type="TreeFam" id="TF332727"/>
<dbReference type="PathwayCommons" id="P33764"/>
<dbReference type="SignaLink" id="P33764"/>
<dbReference type="BioGRID-ORCS" id="6274">
    <property type="hits" value="12 hits in 1142 CRISPR screens"/>
</dbReference>
<dbReference type="ChiTaRS" id="S100A3">
    <property type="organism name" value="human"/>
</dbReference>
<dbReference type="EvolutionaryTrace" id="P33764"/>
<dbReference type="GeneWiki" id="S100A3"/>
<dbReference type="GenomeRNAi" id="6274"/>
<dbReference type="Pharos" id="P33764">
    <property type="development level" value="Tbio"/>
</dbReference>
<dbReference type="PRO" id="PR:P33764"/>
<dbReference type="Proteomes" id="UP000005640">
    <property type="component" value="Chromosome 1"/>
</dbReference>
<dbReference type="RNAct" id="P33764">
    <property type="molecule type" value="protein"/>
</dbReference>
<dbReference type="Bgee" id="ENSG00000188015">
    <property type="expression patterns" value="Expressed in lower esophagus mucosa and 109 other cell types or tissues"/>
</dbReference>
<dbReference type="GO" id="GO:0005829">
    <property type="term" value="C:cytosol"/>
    <property type="evidence" value="ECO:0000314"/>
    <property type="project" value="HPA"/>
</dbReference>
<dbReference type="GO" id="GO:0005794">
    <property type="term" value="C:Golgi apparatus"/>
    <property type="evidence" value="ECO:0000314"/>
    <property type="project" value="HPA"/>
</dbReference>
<dbReference type="GO" id="GO:0005886">
    <property type="term" value="C:plasma membrane"/>
    <property type="evidence" value="ECO:0000314"/>
    <property type="project" value="HPA"/>
</dbReference>
<dbReference type="GO" id="GO:0005509">
    <property type="term" value="F:calcium ion binding"/>
    <property type="evidence" value="ECO:0000318"/>
    <property type="project" value="GO_Central"/>
</dbReference>
<dbReference type="GO" id="GO:0048306">
    <property type="term" value="F:calcium-dependent protein binding"/>
    <property type="evidence" value="ECO:0000318"/>
    <property type="project" value="GO_Central"/>
</dbReference>
<dbReference type="GO" id="GO:0046914">
    <property type="term" value="F:transition metal ion binding"/>
    <property type="evidence" value="ECO:0007669"/>
    <property type="project" value="InterPro"/>
</dbReference>
<dbReference type="CDD" id="cd00213">
    <property type="entry name" value="S-100"/>
    <property type="match status" value="1"/>
</dbReference>
<dbReference type="FunFam" id="1.10.238.10:FF:000230">
    <property type="entry name" value="Protein S100-A3"/>
    <property type="match status" value="1"/>
</dbReference>
<dbReference type="Gene3D" id="1.10.238.10">
    <property type="entry name" value="EF-hand"/>
    <property type="match status" value="1"/>
</dbReference>
<dbReference type="InterPro" id="IPR011992">
    <property type="entry name" value="EF-hand-dom_pair"/>
</dbReference>
<dbReference type="InterPro" id="IPR034325">
    <property type="entry name" value="S-100_dom"/>
</dbReference>
<dbReference type="InterPro" id="IPR001751">
    <property type="entry name" value="S100/CaBP7/8-like_CS"/>
</dbReference>
<dbReference type="InterPro" id="IPR013787">
    <property type="entry name" value="S100_Ca-bd_sub"/>
</dbReference>
<dbReference type="PANTHER" id="PTHR11639:SF12">
    <property type="entry name" value="PROTEIN S100-A3"/>
    <property type="match status" value="1"/>
</dbReference>
<dbReference type="PANTHER" id="PTHR11639">
    <property type="entry name" value="S100 CALCIUM-BINDING PROTEIN"/>
    <property type="match status" value="1"/>
</dbReference>
<dbReference type="Pfam" id="PF01023">
    <property type="entry name" value="S_100"/>
    <property type="match status" value="1"/>
</dbReference>
<dbReference type="SMART" id="SM01394">
    <property type="entry name" value="S_100"/>
    <property type="match status" value="1"/>
</dbReference>
<dbReference type="SUPFAM" id="SSF47473">
    <property type="entry name" value="EF-hand"/>
    <property type="match status" value="1"/>
</dbReference>
<dbReference type="PROSITE" id="PS00303">
    <property type="entry name" value="S100_CABP"/>
    <property type="match status" value="1"/>
</dbReference>
<comment type="function">
    <text evidence="3">Binds both calcium and zinc. May be involved in calcium-dependent cuticle cell differentiation, hair shaft and hair cuticular barrier formation.</text>
</comment>
<comment type="subunit">
    <text evidence="3">Homodimer and homotetramer for the citrullinated form.</text>
</comment>
<comment type="interaction">
    <interactant intactId="EBI-1044747">
        <id>P33764</id>
    </interactant>
    <interactant intactId="EBI-739832">
        <id>Q8TBB1</id>
        <label>LNX1</label>
    </interactant>
    <organismsDiffer>false</organismsDiffer>
    <experiments>3</experiments>
</comment>
<comment type="interaction">
    <interactant intactId="EBI-1044747">
        <id>P33764</id>
    </interactant>
    <interactant intactId="EBI-743686">
        <id>P23297</id>
        <label>S100A1</label>
    </interactant>
    <organismsDiffer>false</organismsDiffer>
    <experiments>3</experiments>
</comment>
<comment type="interaction">
    <interactant intactId="EBI-1044747">
        <id>P33764</id>
    </interactant>
    <interactant intactId="EBI-717048">
        <id>P60903</id>
        <label>S100A10</label>
    </interactant>
    <organismsDiffer>false</organismsDiffer>
    <experiments>3</experiments>
</comment>
<comment type="interaction">
    <interactant intactId="EBI-1044747">
        <id>P33764</id>
    </interactant>
    <interactant intactId="EBI-752230">
        <id>P29034</id>
        <label>S100A2</label>
    </interactant>
    <organismsDiffer>false</organismsDiffer>
    <experiments>5</experiments>
</comment>
<comment type="interaction">
    <interactant intactId="EBI-1044747">
        <id>P33764</id>
    </interactant>
    <interactant intactId="EBI-12198403">
        <id>Q8WXG8</id>
        <label>S100Z</label>
    </interactant>
    <organismsDiffer>false</organismsDiffer>
    <experiments>3</experiments>
</comment>
<comment type="interaction">
    <interactant intactId="EBI-1044747">
        <id>P33764</id>
    </interactant>
    <interactant intactId="EBI-366083">
        <id>P04637</id>
        <label>TP53</label>
    </interactant>
    <organismsDiffer>false</organismsDiffer>
    <experiments>2</experiments>
</comment>
<comment type="interaction">
    <interactant intactId="EBI-1044747">
        <id>P33764</id>
    </interactant>
    <interactant intactId="EBI-11723041">
        <id>Q8TD43</id>
        <label>TRPM4</label>
    </interactant>
    <organismsDiffer>false</organismsDiffer>
    <experiments>2</experiments>
</comment>
<comment type="subcellular location">
    <subcellularLocation>
        <location evidence="3">Cytoplasm</location>
    </subcellularLocation>
</comment>
<comment type="tissue specificity">
    <text evidence="2">Skin specific, specifically expressed at the inner endocuticle of hair fibers.</text>
</comment>
<comment type="PTM">
    <text evidence="3">More than half of the arginine residues undergo citrullination by PAD1 and PAD2. Arg-51 is specifically citrullinated by PAD3 and promotes tetramerization.</text>
</comment>
<comment type="similarity">
    <text evidence="5">Belongs to the S-100 family.</text>
</comment>
<name>S10A3_HUMAN</name>
<reference key="1">
    <citation type="journal article" date="1993" name="Proc. Natl. Acad. Sci. U.S.A.">
        <title>Six S100 genes are clustered on human chromosome 1q21: identification of two genes coding for the two previously unreported calcium-binding proteins S100D and S100E.</title>
        <authorList>
            <person name="Engelkamp D."/>
            <person name="Schaefer B.W."/>
            <person name="Mattei M.-G."/>
            <person name="Erne P."/>
            <person name="Heizmann C.W."/>
        </authorList>
    </citation>
    <scope>NUCLEOTIDE SEQUENCE [GENOMIC DNA / MRNA]</scope>
</reference>
<reference key="2">
    <citation type="submission" date="2003-05" db="EMBL/GenBank/DDBJ databases">
        <title>Cloning of human full-length CDSs in BD Creator(TM) system donor vector.</title>
        <authorList>
            <person name="Kalnine N."/>
            <person name="Chen X."/>
            <person name="Rolfs A."/>
            <person name="Halleck A."/>
            <person name="Hines L."/>
            <person name="Eisenstein S."/>
            <person name="Koundinya M."/>
            <person name="Raphael J."/>
            <person name="Moreira D."/>
            <person name="Kelley T."/>
            <person name="LaBaer J."/>
            <person name="Lin Y."/>
            <person name="Phelan M."/>
            <person name="Farmer A."/>
        </authorList>
    </citation>
    <scope>NUCLEOTIDE SEQUENCE [LARGE SCALE MRNA]</scope>
</reference>
<reference key="3">
    <citation type="submission" date="2004-06" db="EMBL/GenBank/DDBJ databases">
        <title>Cloning of human full open reading frames in Gateway(TM) system entry vector (pDONR201).</title>
        <authorList>
            <person name="Halleck A."/>
            <person name="Ebert L."/>
            <person name="Mkoundinya M."/>
            <person name="Schick M."/>
            <person name="Eisenstein S."/>
            <person name="Neubert P."/>
            <person name="Kstrang K."/>
            <person name="Schatten R."/>
            <person name="Shen B."/>
            <person name="Henze S."/>
            <person name="Mar W."/>
            <person name="Korn B."/>
            <person name="Zuo D."/>
            <person name="Hu Y."/>
            <person name="LaBaer J."/>
        </authorList>
    </citation>
    <scope>NUCLEOTIDE SEQUENCE [LARGE SCALE MRNA]</scope>
</reference>
<reference key="4">
    <citation type="journal article" date="2006" name="Nature">
        <title>The DNA sequence and biological annotation of human chromosome 1.</title>
        <authorList>
            <person name="Gregory S.G."/>
            <person name="Barlow K.F."/>
            <person name="McLay K.E."/>
            <person name="Kaul R."/>
            <person name="Swarbreck D."/>
            <person name="Dunham A."/>
            <person name="Scott C.E."/>
            <person name="Howe K.L."/>
            <person name="Woodfine K."/>
            <person name="Spencer C.C.A."/>
            <person name="Jones M.C."/>
            <person name="Gillson C."/>
            <person name="Searle S."/>
            <person name="Zhou Y."/>
            <person name="Kokocinski F."/>
            <person name="McDonald L."/>
            <person name="Evans R."/>
            <person name="Phillips K."/>
            <person name="Atkinson A."/>
            <person name="Cooper R."/>
            <person name="Jones C."/>
            <person name="Hall R.E."/>
            <person name="Andrews T.D."/>
            <person name="Lloyd C."/>
            <person name="Ainscough R."/>
            <person name="Almeida J.P."/>
            <person name="Ambrose K.D."/>
            <person name="Anderson F."/>
            <person name="Andrew R.W."/>
            <person name="Ashwell R.I.S."/>
            <person name="Aubin K."/>
            <person name="Babbage A.K."/>
            <person name="Bagguley C.L."/>
            <person name="Bailey J."/>
            <person name="Beasley H."/>
            <person name="Bethel G."/>
            <person name="Bird C.P."/>
            <person name="Bray-Allen S."/>
            <person name="Brown J.Y."/>
            <person name="Brown A.J."/>
            <person name="Buckley D."/>
            <person name="Burton J."/>
            <person name="Bye J."/>
            <person name="Carder C."/>
            <person name="Chapman J.C."/>
            <person name="Clark S.Y."/>
            <person name="Clarke G."/>
            <person name="Clee C."/>
            <person name="Cobley V."/>
            <person name="Collier R.E."/>
            <person name="Corby N."/>
            <person name="Coville G.J."/>
            <person name="Davies J."/>
            <person name="Deadman R."/>
            <person name="Dunn M."/>
            <person name="Earthrowl M."/>
            <person name="Ellington A.G."/>
            <person name="Errington H."/>
            <person name="Frankish A."/>
            <person name="Frankland J."/>
            <person name="French L."/>
            <person name="Garner P."/>
            <person name="Garnett J."/>
            <person name="Gay L."/>
            <person name="Ghori M.R.J."/>
            <person name="Gibson R."/>
            <person name="Gilby L.M."/>
            <person name="Gillett W."/>
            <person name="Glithero R.J."/>
            <person name="Grafham D.V."/>
            <person name="Griffiths C."/>
            <person name="Griffiths-Jones S."/>
            <person name="Grocock R."/>
            <person name="Hammond S."/>
            <person name="Harrison E.S.I."/>
            <person name="Hart E."/>
            <person name="Haugen E."/>
            <person name="Heath P.D."/>
            <person name="Holmes S."/>
            <person name="Holt K."/>
            <person name="Howden P.J."/>
            <person name="Hunt A.R."/>
            <person name="Hunt S.E."/>
            <person name="Hunter G."/>
            <person name="Isherwood J."/>
            <person name="James R."/>
            <person name="Johnson C."/>
            <person name="Johnson D."/>
            <person name="Joy A."/>
            <person name="Kay M."/>
            <person name="Kershaw J.K."/>
            <person name="Kibukawa M."/>
            <person name="Kimberley A.M."/>
            <person name="King A."/>
            <person name="Knights A.J."/>
            <person name="Lad H."/>
            <person name="Laird G."/>
            <person name="Lawlor S."/>
            <person name="Leongamornlert D.A."/>
            <person name="Lloyd D.M."/>
            <person name="Loveland J."/>
            <person name="Lovell J."/>
            <person name="Lush M.J."/>
            <person name="Lyne R."/>
            <person name="Martin S."/>
            <person name="Mashreghi-Mohammadi M."/>
            <person name="Matthews L."/>
            <person name="Matthews N.S.W."/>
            <person name="McLaren S."/>
            <person name="Milne S."/>
            <person name="Mistry S."/>
            <person name="Moore M.J.F."/>
            <person name="Nickerson T."/>
            <person name="O'Dell C.N."/>
            <person name="Oliver K."/>
            <person name="Palmeiri A."/>
            <person name="Palmer S.A."/>
            <person name="Parker A."/>
            <person name="Patel D."/>
            <person name="Pearce A.V."/>
            <person name="Peck A.I."/>
            <person name="Pelan S."/>
            <person name="Phelps K."/>
            <person name="Phillimore B.J."/>
            <person name="Plumb R."/>
            <person name="Rajan J."/>
            <person name="Raymond C."/>
            <person name="Rouse G."/>
            <person name="Saenphimmachak C."/>
            <person name="Sehra H.K."/>
            <person name="Sheridan E."/>
            <person name="Shownkeen R."/>
            <person name="Sims S."/>
            <person name="Skuce C.D."/>
            <person name="Smith M."/>
            <person name="Steward C."/>
            <person name="Subramanian S."/>
            <person name="Sycamore N."/>
            <person name="Tracey A."/>
            <person name="Tromans A."/>
            <person name="Van Helmond Z."/>
            <person name="Wall M."/>
            <person name="Wallis J.M."/>
            <person name="White S."/>
            <person name="Whitehead S.L."/>
            <person name="Wilkinson J.E."/>
            <person name="Willey D.L."/>
            <person name="Williams H."/>
            <person name="Wilming L."/>
            <person name="Wray P.W."/>
            <person name="Wu Z."/>
            <person name="Coulson A."/>
            <person name="Vaudin M."/>
            <person name="Sulston J.E."/>
            <person name="Durbin R.M."/>
            <person name="Hubbard T."/>
            <person name="Wooster R."/>
            <person name="Dunham I."/>
            <person name="Carter N.P."/>
            <person name="McVean G."/>
            <person name="Ross M.T."/>
            <person name="Harrow J."/>
            <person name="Olson M.V."/>
            <person name="Beck S."/>
            <person name="Rogers J."/>
            <person name="Bentley D.R."/>
        </authorList>
    </citation>
    <scope>NUCLEOTIDE SEQUENCE [LARGE SCALE GENOMIC DNA]</scope>
</reference>
<reference key="5">
    <citation type="submission" date="2005-09" db="EMBL/GenBank/DDBJ databases">
        <authorList>
            <person name="Mural R.J."/>
            <person name="Istrail S."/>
            <person name="Sutton G.G."/>
            <person name="Florea L."/>
            <person name="Halpern A.L."/>
            <person name="Mobarry C.M."/>
            <person name="Lippert R."/>
            <person name="Walenz B."/>
            <person name="Shatkay H."/>
            <person name="Dew I."/>
            <person name="Miller J.R."/>
            <person name="Flanigan M.J."/>
            <person name="Edwards N.J."/>
            <person name="Bolanos R."/>
            <person name="Fasulo D."/>
            <person name="Halldorsson B.V."/>
            <person name="Hannenhalli S."/>
            <person name="Turner R."/>
            <person name="Yooseph S."/>
            <person name="Lu F."/>
            <person name="Nusskern D.R."/>
            <person name="Shue B.C."/>
            <person name="Zheng X.H."/>
            <person name="Zhong F."/>
            <person name="Delcher A.L."/>
            <person name="Huson D.H."/>
            <person name="Kravitz S.A."/>
            <person name="Mouchard L."/>
            <person name="Reinert K."/>
            <person name="Remington K.A."/>
            <person name="Clark A.G."/>
            <person name="Waterman M.S."/>
            <person name="Eichler E.E."/>
            <person name="Adams M.D."/>
            <person name="Hunkapiller M.W."/>
            <person name="Myers E.W."/>
            <person name="Venter J.C."/>
        </authorList>
    </citation>
    <scope>NUCLEOTIDE SEQUENCE [LARGE SCALE GENOMIC DNA]</scope>
</reference>
<reference key="6">
    <citation type="journal article" date="2004" name="Genome Res.">
        <title>The status, quality, and expansion of the NIH full-length cDNA project: the Mammalian Gene Collection (MGC).</title>
        <authorList>
            <consortium name="The MGC Project Team"/>
        </authorList>
    </citation>
    <scope>NUCLEOTIDE SEQUENCE [LARGE SCALE MRNA]</scope>
    <source>
        <tissue>Lung</tissue>
    </source>
</reference>
<reference key="7">
    <citation type="journal article" date="1998" name="Biochim. Biophys. Acta">
        <title>Probing the structure of the human Ca2+- and Zn2+-binding protein S100A3: spectroscopic investigations of its transition metal ion complexes, and three-dimensional structural model.</title>
        <authorList>
            <person name="Fritz G."/>
            <person name="Heizmann C.W."/>
            <person name="Kroneck P.M.H."/>
        </authorList>
    </citation>
    <scope>CHARACTERIZATION</scope>
</reference>
<reference key="8">
    <citation type="journal article" date="2002" name="Biochem. Biophys. Res. Commun.">
        <title>Characterization of the cysteine-rich calcium-binding S100A3 protein from human hair cuticles.</title>
        <authorList>
            <person name="Kizawa K."/>
            <person name="Troxler H."/>
            <person name="Kleinert P."/>
            <person name="Inoue T."/>
            <person name="Toyoda M."/>
            <person name="Morohashi M."/>
            <person name="Heizmann C.W."/>
        </authorList>
    </citation>
    <scope>CLEAVAGE OF INITIATOR METHIONINE</scope>
    <scope>ACETYLATION AT ALA-2</scope>
    <scope>TISSUE SPECIFICITY</scope>
</reference>
<reference key="9">
    <citation type="journal article" date="2008" name="J. Biol. Chem.">
        <title>Specific citrullination causes assembly of a globular S100A3 homotetramer: a putative Ca2+ modulator matures human hair cuticle.</title>
        <authorList>
            <person name="Kizawa K."/>
            <person name="Takahara H."/>
            <person name="Troxler H."/>
            <person name="Kleinert P."/>
            <person name="Mochida U."/>
            <person name="Heizmann C.W."/>
        </authorList>
    </citation>
    <scope>FUNCTION</scope>
    <scope>SUBUNIT</scope>
    <scope>CITRULLINATION AT ARG-51</scope>
    <scope>SUBCELLULAR LOCATION</scope>
</reference>
<reference key="10">
    <citation type="journal article" date="2002" name="Acta Crystallogr. D">
        <title>Metal-free MIRAS phasing: structure of apo-S100A3.</title>
        <authorList>
            <person name="Mittl P.R."/>
            <person name="Fritz G."/>
            <person name="Sargent D.F."/>
            <person name="Richmond T.J."/>
            <person name="Heizmann C.W."/>
            <person name="Grutter M.G."/>
        </authorList>
    </citation>
    <scope>X-RAY CRYSTALLOGRAPHY (1.7 ANGSTROMS)</scope>
</reference>
<reference key="11">
    <citation type="journal article" date="2011" name="J. Mol. Biol.">
        <title>Refined crystal structures of human Ca(2+)/Zn(2+)-binding S100A3 protein characterized by two disulfide bridges.</title>
        <authorList>
            <person name="Unno M."/>
            <person name="Kawasaki T."/>
            <person name="Takahara H."/>
            <person name="Heizmann C.W."/>
            <person name="Kizawa K."/>
        </authorList>
    </citation>
    <scope>X-RAY CRYSTALLOGRAPHY (1.45 ANGSTROMS)</scope>
    <scope>DISULFIDE BONDS</scope>
    <scope>ZINC-BINDING SITES</scope>
    <scope>MUTAGENESIS OF CYS-30; CYS-68; CYS-81 AND CYS-99</scope>
</reference>
<feature type="initiator methionine" description="Removed" evidence="2">
    <location>
        <position position="1"/>
    </location>
</feature>
<feature type="chain" id="PRO_0000143972" description="Protein S100-A3">
    <location>
        <begin position="2"/>
        <end position="101"/>
    </location>
</feature>
<feature type="domain" description="EF-hand 1">
    <location>
        <begin position="12"/>
        <end position="47"/>
    </location>
</feature>
<feature type="domain" description="EF-hand 2">
    <location>
        <begin position="50"/>
        <end position="85"/>
    </location>
</feature>
<feature type="binding site" evidence="1">
    <location>
        <position position="28"/>
    </location>
    <ligand>
        <name>Ca(2+)</name>
        <dbReference type="ChEBI" id="CHEBI:29108"/>
        <label>1</label>
        <note>low affinity</note>
    </ligand>
</feature>
<feature type="binding site" evidence="1">
    <location>
        <position position="33"/>
    </location>
    <ligand>
        <name>Ca(2+)</name>
        <dbReference type="ChEBI" id="CHEBI:29108"/>
        <label>1</label>
        <note>low affinity</note>
    </ligand>
</feature>
<feature type="binding site" evidence="1">
    <location>
        <position position="63"/>
    </location>
    <ligand>
        <name>Ca(2+)</name>
        <dbReference type="ChEBI" id="CHEBI:29108"/>
        <label>2</label>
        <note>high affinity</note>
    </ligand>
</feature>
<feature type="binding site" evidence="1">
    <location>
        <position position="65"/>
    </location>
    <ligand>
        <name>Ca(2+)</name>
        <dbReference type="ChEBI" id="CHEBI:29108"/>
        <label>2</label>
        <note>high affinity</note>
    </ligand>
</feature>
<feature type="binding site" evidence="1">
    <location>
        <position position="67"/>
    </location>
    <ligand>
        <name>Ca(2+)</name>
        <dbReference type="ChEBI" id="CHEBI:29108"/>
        <label>2</label>
        <note>high affinity</note>
    </ligand>
</feature>
<feature type="binding site" evidence="1">
    <location>
        <position position="69"/>
    </location>
    <ligand>
        <name>Ca(2+)</name>
        <dbReference type="ChEBI" id="CHEBI:29108"/>
        <label>2</label>
        <note>high affinity</note>
    </ligand>
</feature>
<feature type="binding site" evidence="1">
    <location>
        <position position="74"/>
    </location>
    <ligand>
        <name>Ca(2+)</name>
        <dbReference type="ChEBI" id="CHEBI:29108"/>
        <label>2</label>
        <note>high affinity</note>
    </ligand>
</feature>
<feature type="binding site">
    <location>
        <position position="83"/>
    </location>
    <ligand>
        <name>Zn(2+)</name>
        <dbReference type="ChEBI" id="CHEBI:29105"/>
    </ligand>
</feature>
<feature type="binding site">
    <location>
        <position position="86"/>
    </location>
    <ligand>
        <name>Zn(2+)</name>
        <dbReference type="ChEBI" id="CHEBI:29105"/>
    </ligand>
</feature>
<feature type="binding site">
    <location>
        <position position="87"/>
    </location>
    <ligand>
        <name>Zn(2+)</name>
        <dbReference type="ChEBI" id="CHEBI:29105"/>
    </ligand>
</feature>
<feature type="binding site">
    <location>
        <position position="93"/>
    </location>
    <ligand>
        <name>Zn(2+)</name>
        <dbReference type="ChEBI" id="CHEBI:29105"/>
    </ligand>
</feature>
<feature type="modified residue" description="N-acetylalanine" evidence="2">
    <location>
        <position position="2"/>
    </location>
</feature>
<feature type="modified residue" description="Citrulline; by PAD3" evidence="3">
    <location>
        <position position="51"/>
    </location>
</feature>
<feature type="disulfide bond" evidence="4">
    <location>
        <begin position="30"/>
        <end position="68"/>
    </location>
</feature>
<feature type="disulfide bond" evidence="4">
    <location>
        <begin position="81"/>
        <end position="99"/>
    </location>
</feature>
<feature type="sequence variant" id="VAR_061047" description="In dbSNP:rs36022742.">
    <original>R</original>
    <variation>K</variation>
    <location>
        <position position="3"/>
    </location>
</feature>
<feature type="mutagenesis site" description="Abolishes calcium binding; when associated with Ala-68." evidence="4">
    <original>C</original>
    <variation>A</variation>
    <location>
        <position position="30"/>
    </location>
</feature>
<feature type="mutagenesis site" description="Abolishes calcium binding; when associated with Ala-30." evidence="4">
    <original>C</original>
    <variation>A</variation>
    <location>
        <position position="68"/>
    </location>
</feature>
<feature type="mutagenesis site" description="Increases affinity for calcium; when associated with Ala-99." evidence="4">
    <original>C</original>
    <variation>A</variation>
    <location>
        <position position="81"/>
    </location>
</feature>
<feature type="mutagenesis site" description="Increases affinity for calcium; when associated with Ala-81." evidence="4">
    <original>C</original>
    <variation>A</variation>
    <location>
        <position position="99"/>
    </location>
</feature>
<feature type="helix" evidence="9">
    <location>
        <begin position="4"/>
        <end position="20"/>
    </location>
</feature>
<feature type="strand" evidence="6">
    <location>
        <begin position="22"/>
        <end position="24"/>
    </location>
</feature>
<feature type="strand" evidence="8">
    <location>
        <begin position="28"/>
        <end position="30"/>
    </location>
</feature>
<feature type="helix" evidence="9">
    <location>
        <begin position="31"/>
        <end position="41"/>
    </location>
</feature>
<feature type="turn" evidence="9">
    <location>
        <begin position="42"/>
        <end position="44"/>
    </location>
</feature>
<feature type="turn" evidence="7">
    <location>
        <begin position="49"/>
        <end position="51"/>
    </location>
</feature>
<feature type="helix" evidence="9">
    <location>
        <begin position="52"/>
        <end position="64"/>
    </location>
</feature>
<feature type="turn" evidence="8">
    <location>
        <begin position="65"/>
        <end position="67"/>
    </location>
</feature>
<feature type="strand" evidence="8">
    <location>
        <begin position="68"/>
        <end position="71"/>
    </location>
</feature>
<feature type="helix" evidence="9">
    <location>
        <begin position="72"/>
        <end position="86"/>
    </location>
</feature>
<feature type="helix" evidence="9">
    <location>
        <begin position="88"/>
        <end position="90"/>
    </location>
</feature>
<gene>
    <name type="primary">S100A3</name>
    <name type="synonym">S100E</name>
</gene>
<organism>
    <name type="scientific">Homo sapiens</name>
    <name type="common">Human</name>
    <dbReference type="NCBI Taxonomy" id="9606"/>
    <lineage>
        <taxon>Eukaryota</taxon>
        <taxon>Metazoa</taxon>
        <taxon>Chordata</taxon>
        <taxon>Craniata</taxon>
        <taxon>Vertebrata</taxon>
        <taxon>Euteleostomi</taxon>
        <taxon>Mammalia</taxon>
        <taxon>Eutheria</taxon>
        <taxon>Euarchontoglires</taxon>
        <taxon>Primates</taxon>
        <taxon>Haplorrhini</taxon>
        <taxon>Catarrhini</taxon>
        <taxon>Hominidae</taxon>
        <taxon>Homo</taxon>
    </lineage>
</organism>
<protein>
    <recommendedName>
        <fullName>Protein S100-A3</fullName>
    </recommendedName>
    <alternativeName>
        <fullName>Protein S-100E</fullName>
    </alternativeName>
    <alternativeName>
        <fullName>S100 calcium-binding protein A3</fullName>
    </alternativeName>
</protein>
<proteinExistence type="evidence at protein level"/>
<sequence length="101" mass="11713">MARPLEQAVAAIVCTFQEYAGRCGDKYKLCQAELKELLQKELATWTPTEFRECDYNKFMSVLDTNKDCEVDFVEYVRSLACLCLYCHEYFKDCPSEPPCSQ</sequence>
<accession>P33764</accession>
<accession>D3DV51</accession>
<accession>Q6FGE4</accession>
<keyword id="KW-0002">3D-structure</keyword>
<keyword id="KW-0007">Acetylation</keyword>
<keyword id="KW-0106">Calcium</keyword>
<keyword id="KW-0164">Citrullination</keyword>
<keyword id="KW-0963">Cytoplasm</keyword>
<keyword id="KW-1015">Disulfide bond</keyword>
<keyword id="KW-0479">Metal-binding</keyword>
<keyword id="KW-1267">Proteomics identification</keyword>
<keyword id="KW-1185">Reference proteome</keyword>
<keyword id="KW-0677">Repeat</keyword>
<keyword id="KW-0862">Zinc</keyword>
<evidence type="ECO:0000255" key="1"/>
<evidence type="ECO:0000269" key="2">
    <source>
    </source>
</evidence>
<evidence type="ECO:0000269" key="3">
    <source>
    </source>
</evidence>
<evidence type="ECO:0000269" key="4">
    <source>
    </source>
</evidence>
<evidence type="ECO:0000305" key="5"/>
<evidence type="ECO:0007829" key="6">
    <source>
        <dbReference type="PDB" id="1KSO"/>
    </source>
</evidence>
<evidence type="ECO:0007829" key="7">
    <source>
        <dbReference type="PDB" id="3NSK"/>
    </source>
</evidence>
<evidence type="ECO:0007829" key="8">
    <source>
        <dbReference type="PDB" id="3NSL"/>
    </source>
</evidence>
<evidence type="ECO:0007829" key="9">
    <source>
        <dbReference type="PDB" id="3NSO"/>
    </source>
</evidence>